<gene>
    <name type="primary">mt-cyb</name>
    <name type="synonym">cob</name>
    <name type="synonym">cytb</name>
    <name type="synonym">mtcyb</name>
</gene>
<comment type="function">
    <text evidence="2">Component of the ubiquinol-cytochrome c reductase complex (complex III or cytochrome b-c1 complex) that is part of the mitochondrial respiratory chain. The b-c1 complex mediates electron transfer from ubiquinol to cytochrome c. Contributes to the generation of a proton gradient across the mitochondrial membrane that is then used for ATP synthesis.</text>
</comment>
<comment type="cofactor">
    <cofactor evidence="2">
        <name>heme b</name>
        <dbReference type="ChEBI" id="CHEBI:60344"/>
    </cofactor>
    <text evidence="2">Binds 2 heme b groups non-covalently.</text>
</comment>
<comment type="subunit">
    <text evidence="2">The cytochrome bc1 complex contains 3 respiratory subunits (MT-CYB, CYC1 and UQCRFS1), 2 core proteins (UQCRC1 and UQCRC2) and probably 6 low-molecular weight proteins.</text>
</comment>
<comment type="subcellular location">
    <subcellularLocation>
        <location evidence="2">Mitochondrion inner membrane</location>
        <topology evidence="2">Multi-pass membrane protein</topology>
    </subcellularLocation>
</comment>
<comment type="miscellaneous">
    <text evidence="1">Heme 1 (or BL or b562) is low-potential and absorbs at about 562 nm, and heme 2 (or BH or b566) is high-potential and absorbs at about 566 nm.</text>
</comment>
<comment type="similarity">
    <text evidence="3 4">Belongs to the cytochrome b family.</text>
</comment>
<comment type="caution">
    <text evidence="2">The full-length protein contains only eight transmembrane helices, not nine as predicted by bioinformatics tools.</text>
</comment>
<proteinExistence type="inferred from homology"/>
<feature type="chain" id="PRO_0000060582" description="Cytochrome b">
    <location>
        <begin position="1"/>
        <end position="379"/>
    </location>
</feature>
<feature type="transmembrane region" description="Helical" evidence="2">
    <location>
        <begin position="33"/>
        <end position="53"/>
    </location>
</feature>
<feature type="transmembrane region" description="Helical" evidence="2">
    <location>
        <begin position="77"/>
        <end position="98"/>
    </location>
</feature>
<feature type="transmembrane region" description="Helical" evidence="2">
    <location>
        <begin position="113"/>
        <end position="133"/>
    </location>
</feature>
<feature type="transmembrane region" description="Helical" evidence="2">
    <location>
        <begin position="178"/>
        <end position="198"/>
    </location>
</feature>
<feature type="transmembrane region" description="Helical" evidence="2">
    <location>
        <begin position="226"/>
        <end position="246"/>
    </location>
</feature>
<feature type="transmembrane region" description="Helical" evidence="2">
    <location>
        <begin position="288"/>
        <end position="308"/>
    </location>
</feature>
<feature type="transmembrane region" description="Helical" evidence="2">
    <location>
        <begin position="320"/>
        <end position="340"/>
    </location>
</feature>
<feature type="transmembrane region" description="Helical" evidence="2">
    <location>
        <begin position="347"/>
        <end position="367"/>
    </location>
</feature>
<feature type="binding site" description="axial binding residue" evidence="2">
    <location>
        <position position="83"/>
    </location>
    <ligand>
        <name>heme b</name>
        <dbReference type="ChEBI" id="CHEBI:60344"/>
        <label>b562</label>
    </ligand>
    <ligandPart>
        <name>Fe</name>
        <dbReference type="ChEBI" id="CHEBI:18248"/>
    </ligandPart>
</feature>
<feature type="binding site" description="axial binding residue" evidence="2">
    <location>
        <position position="97"/>
    </location>
    <ligand>
        <name>heme b</name>
        <dbReference type="ChEBI" id="CHEBI:60344"/>
        <label>b566</label>
    </ligand>
    <ligandPart>
        <name>Fe</name>
        <dbReference type="ChEBI" id="CHEBI:18248"/>
    </ligandPart>
</feature>
<feature type="binding site" description="axial binding residue" evidence="2">
    <location>
        <position position="182"/>
    </location>
    <ligand>
        <name>heme b</name>
        <dbReference type="ChEBI" id="CHEBI:60344"/>
        <label>b562</label>
    </ligand>
    <ligandPart>
        <name>Fe</name>
        <dbReference type="ChEBI" id="CHEBI:18248"/>
    </ligandPart>
</feature>
<feature type="binding site" description="axial binding residue" evidence="2">
    <location>
        <position position="196"/>
    </location>
    <ligand>
        <name>heme b</name>
        <dbReference type="ChEBI" id="CHEBI:60344"/>
        <label>b566</label>
    </ligand>
    <ligandPart>
        <name>Fe</name>
        <dbReference type="ChEBI" id="CHEBI:18248"/>
    </ligandPart>
</feature>
<feature type="binding site" evidence="2">
    <location>
        <position position="201"/>
    </location>
    <ligand>
        <name>a ubiquinone</name>
        <dbReference type="ChEBI" id="CHEBI:16389"/>
    </ligand>
</feature>
<dbReference type="EMBL" id="AB021768">
    <property type="protein sequence ID" value="BAB20291.1"/>
    <property type="molecule type" value="Genomic_DNA"/>
</dbReference>
<dbReference type="EMBL" id="AF006706">
    <property type="protein sequence ID" value="AAC98869.1"/>
    <property type="molecule type" value="Genomic_DNA"/>
</dbReference>
<dbReference type="EMBL" id="AF006707">
    <property type="protein sequence ID" value="AAC98870.1"/>
    <property type="molecule type" value="Genomic_DNA"/>
</dbReference>
<dbReference type="EMBL" id="AP007248">
    <property type="protein sequence ID" value="BAD78178.1"/>
    <property type="molecule type" value="Genomic_DNA"/>
</dbReference>
<dbReference type="RefSeq" id="YP_164023.1">
    <property type="nucleotide sequence ID" value="NC_006546.1"/>
</dbReference>
<dbReference type="SMR" id="Q33842"/>
<dbReference type="GeneID" id="3190439"/>
<dbReference type="CTD" id="4519"/>
<dbReference type="GO" id="GO:0005743">
    <property type="term" value="C:mitochondrial inner membrane"/>
    <property type="evidence" value="ECO:0007669"/>
    <property type="project" value="UniProtKB-SubCell"/>
</dbReference>
<dbReference type="GO" id="GO:0045275">
    <property type="term" value="C:respiratory chain complex III"/>
    <property type="evidence" value="ECO:0007669"/>
    <property type="project" value="InterPro"/>
</dbReference>
<dbReference type="GO" id="GO:0046872">
    <property type="term" value="F:metal ion binding"/>
    <property type="evidence" value="ECO:0007669"/>
    <property type="project" value="UniProtKB-KW"/>
</dbReference>
<dbReference type="GO" id="GO:0008121">
    <property type="term" value="F:ubiquinol-cytochrome-c reductase activity"/>
    <property type="evidence" value="ECO:0007669"/>
    <property type="project" value="InterPro"/>
</dbReference>
<dbReference type="GO" id="GO:0006122">
    <property type="term" value="P:mitochondrial electron transport, ubiquinol to cytochrome c"/>
    <property type="evidence" value="ECO:0007669"/>
    <property type="project" value="TreeGrafter"/>
</dbReference>
<dbReference type="CDD" id="cd00290">
    <property type="entry name" value="cytochrome_b_C"/>
    <property type="match status" value="1"/>
</dbReference>
<dbReference type="CDD" id="cd00284">
    <property type="entry name" value="Cytochrome_b_N"/>
    <property type="match status" value="1"/>
</dbReference>
<dbReference type="FunFam" id="1.20.810.10:FF:000002">
    <property type="entry name" value="Cytochrome b"/>
    <property type="match status" value="1"/>
</dbReference>
<dbReference type="Gene3D" id="1.20.810.10">
    <property type="entry name" value="Cytochrome Bc1 Complex, Chain C"/>
    <property type="match status" value="1"/>
</dbReference>
<dbReference type="InterPro" id="IPR005798">
    <property type="entry name" value="Cyt_b/b6_C"/>
</dbReference>
<dbReference type="InterPro" id="IPR036150">
    <property type="entry name" value="Cyt_b/b6_C_sf"/>
</dbReference>
<dbReference type="InterPro" id="IPR005797">
    <property type="entry name" value="Cyt_b/b6_N"/>
</dbReference>
<dbReference type="InterPro" id="IPR027387">
    <property type="entry name" value="Cytb/b6-like_sf"/>
</dbReference>
<dbReference type="InterPro" id="IPR030689">
    <property type="entry name" value="Cytochrome_b"/>
</dbReference>
<dbReference type="InterPro" id="IPR048260">
    <property type="entry name" value="Cytochrome_b_C_euk/bac"/>
</dbReference>
<dbReference type="InterPro" id="IPR048259">
    <property type="entry name" value="Cytochrome_b_N_euk/bac"/>
</dbReference>
<dbReference type="InterPro" id="IPR016174">
    <property type="entry name" value="Di-haem_cyt_TM"/>
</dbReference>
<dbReference type="PANTHER" id="PTHR19271">
    <property type="entry name" value="CYTOCHROME B"/>
    <property type="match status" value="1"/>
</dbReference>
<dbReference type="PANTHER" id="PTHR19271:SF16">
    <property type="entry name" value="CYTOCHROME B"/>
    <property type="match status" value="1"/>
</dbReference>
<dbReference type="Pfam" id="PF00032">
    <property type="entry name" value="Cytochrom_B_C"/>
    <property type="match status" value="1"/>
</dbReference>
<dbReference type="Pfam" id="PF00033">
    <property type="entry name" value="Cytochrome_B"/>
    <property type="match status" value="1"/>
</dbReference>
<dbReference type="PIRSF" id="PIRSF038885">
    <property type="entry name" value="COB"/>
    <property type="match status" value="1"/>
</dbReference>
<dbReference type="SUPFAM" id="SSF81648">
    <property type="entry name" value="a domain/subunit of cytochrome bc1 complex (Ubiquinol-cytochrome c reductase)"/>
    <property type="match status" value="1"/>
</dbReference>
<dbReference type="SUPFAM" id="SSF81342">
    <property type="entry name" value="Transmembrane di-heme cytochromes"/>
    <property type="match status" value="1"/>
</dbReference>
<dbReference type="PROSITE" id="PS51003">
    <property type="entry name" value="CYTB_CTER"/>
    <property type="match status" value="1"/>
</dbReference>
<dbReference type="PROSITE" id="PS51002">
    <property type="entry name" value="CYTB_NTER"/>
    <property type="match status" value="1"/>
</dbReference>
<sequence length="379" mass="42600">MANLRKTHPLLKIANDALVDLPTPSNISAWWNFGSLLGLCLISQILTGLFLAMHYTSDISTAFSSVAHICRDVNYGWLIRNLHANGASFFFICLYLHIARGLYYGSYLYKETWNIGVVLFLLVMMTAFVGYVLPWGQMSFWGATVITNLLSAVPYVGNSLVQWIWGGFSVDNATLTRFFAFHFLFPFVVAGATMIHLLFLHETGSNNPVGLNSDADKIPFHPYFSYKDLLGFIIMLTALTMLALFYPNLLGDPDNFTPANPMVTPPHIKPEWYFLFAYAILRSIPNKLGGVLALLSSILVLMVVPILHTSKQRGLTFRPASQLLFWILVADMLVLTWIGGMPVEHPYIIIGQVASVLYFSLFLVLNPLVGWLENKMMNW</sequence>
<reference key="1">
    <citation type="thesis" date="1998" institute="Ocean Research Institute / University of Tokyo" country="Japan">
        <title>Molecular phylogeny and evolution of the freshwater eels, genus Anguilla.</title>
        <authorList>
            <person name="Aoyama J."/>
        </authorList>
    </citation>
    <scope>NUCLEOTIDE SEQUENCE [GENOMIC DNA]</scope>
    <source>
        <tissue>Liver</tissue>
    </source>
</reference>
<reference key="2">
    <citation type="journal article" date="2001" name="Mol. Phylogenet. Evol.">
        <title>A phylogeny of freshwater eels inferred from mitochondrial genes.</title>
        <authorList>
            <person name="Lin Y.S."/>
            <person name="Poh Y.P."/>
            <person name="Tzeng C.S."/>
        </authorList>
    </citation>
    <scope>NUCLEOTIDE SEQUENCE [GENOMIC DNA]</scope>
</reference>
<reference key="3">
    <citation type="journal article" date="2005" name="Mol. Phylogenet. Evol.">
        <title>Molecular phylogeny and evolution of the freshwater eels genus Anguilla based on the whole mitochondrial genome sequences.</title>
        <authorList>
            <person name="Minegishi Y."/>
            <person name="Aoyama J."/>
            <person name="Inoue J.G."/>
            <person name="Miya M."/>
            <person name="Nishida M."/>
            <person name="Tsukamoto K."/>
        </authorList>
    </citation>
    <scope>NUCLEOTIDE SEQUENCE [GENOMIC DNA]</scope>
</reference>
<organism>
    <name type="scientific">Anguilla reinhardtii</name>
    <name type="common">Speckled longfin eel</name>
    <dbReference type="NCBI Taxonomy" id="48165"/>
    <lineage>
        <taxon>Eukaryota</taxon>
        <taxon>Metazoa</taxon>
        <taxon>Chordata</taxon>
        <taxon>Craniata</taxon>
        <taxon>Vertebrata</taxon>
        <taxon>Euteleostomi</taxon>
        <taxon>Actinopterygii</taxon>
        <taxon>Neopterygii</taxon>
        <taxon>Teleostei</taxon>
        <taxon>Anguilliformes</taxon>
        <taxon>Anguillidae</taxon>
        <taxon>Anguilla</taxon>
    </lineage>
</organism>
<geneLocation type="mitochondrion"/>
<name>CYB_ANGRE</name>
<accession>Q33842</accession>
<protein>
    <recommendedName>
        <fullName>Cytochrome b</fullName>
    </recommendedName>
    <alternativeName>
        <fullName>Complex III subunit 3</fullName>
    </alternativeName>
    <alternativeName>
        <fullName>Complex III subunit III</fullName>
    </alternativeName>
    <alternativeName>
        <fullName>Cytochrome b-c1 complex subunit 3</fullName>
    </alternativeName>
    <alternativeName>
        <fullName>Ubiquinol-cytochrome-c reductase complex cytochrome b subunit</fullName>
    </alternativeName>
</protein>
<keyword id="KW-0249">Electron transport</keyword>
<keyword id="KW-0349">Heme</keyword>
<keyword id="KW-0408">Iron</keyword>
<keyword id="KW-0472">Membrane</keyword>
<keyword id="KW-0479">Metal-binding</keyword>
<keyword id="KW-0496">Mitochondrion</keyword>
<keyword id="KW-0999">Mitochondrion inner membrane</keyword>
<keyword id="KW-0679">Respiratory chain</keyword>
<keyword id="KW-0812">Transmembrane</keyword>
<keyword id="KW-1133">Transmembrane helix</keyword>
<keyword id="KW-0813">Transport</keyword>
<keyword id="KW-0830">Ubiquinone</keyword>
<evidence type="ECO:0000250" key="1"/>
<evidence type="ECO:0000250" key="2">
    <source>
        <dbReference type="UniProtKB" id="P00157"/>
    </source>
</evidence>
<evidence type="ECO:0000255" key="3">
    <source>
        <dbReference type="PROSITE-ProRule" id="PRU00967"/>
    </source>
</evidence>
<evidence type="ECO:0000255" key="4">
    <source>
        <dbReference type="PROSITE-ProRule" id="PRU00968"/>
    </source>
</evidence>